<keyword id="KW-0067">ATP-binding</keyword>
<keyword id="KW-0997">Cell inner membrane</keyword>
<keyword id="KW-1003">Cell membrane</keyword>
<keyword id="KW-0472">Membrane</keyword>
<keyword id="KW-0547">Nucleotide-binding</keyword>
<keyword id="KW-1185">Reference proteome</keyword>
<keyword id="KW-0762">Sugar transport</keyword>
<keyword id="KW-1278">Translocase</keyword>
<keyword id="KW-0813">Transport</keyword>
<organism>
    <name type="scientific">Yersinia pestis</name>
    <dbReference type="NCBI Taxonomy" id="632"/>
    <lineage>
        <taxon>Bacteria</taxon>
        <taxon>Pseudomonadati</taxon>
        <taxon>Pseudomonadota</taxon>
        <taxon>Gammaproteobacteria</taxon>
        <taxon>Enterobacterales</taxon>
        <taxon>Yersiniaceae</taxon>
        <taxon>Yersinia</taxon>
    </lineage>
</organism>
<gene>
    <name evidence="1" type="primary">ugpC</name>
    <name type="ordered locus">YPO3793</name>
    <name type="ordered locus">y0437</name>
    <name type="ordered locus">YP_3256</name>
</gene>
<name>UGPC_YERPE</name>
<feature type="chain" id="PRO_0000289790" description="sn-glycerol-3-phosphate import ATP-binding protein UgpC">
    <location>
        <begin position="1"/>
        <end position="357"/>
    </location>
</feature>
<feature type="domain" description="ABC transporter" evidence="1">
    <location>
        <begin position="4"/>
        <end position="235"/>
    </location>
</feature>
<feature type="binding site" evidence="1">
    <location>
        <begin position="37"/>
        <end position="44"/>
    </location>
    <ligand>
        <name>ATP</name>
        <dbReference type="ChEBI" id="CHEBI:30616"/>
    </ligand>
</feature>
<feature type="sequence conflict" description="In Ref. 2; AAM84026." evidence="2" ref="2">
    <original>R</original>
    <variation>L</variation>
    <location>
        <position position="174"/>
    </location>
</feature>
<protein>
    <recommendedName>
        <fullName evidence="1">sn-glycerol-3-phosphate import ATP-binding protein UgpC</fullName>
        <ecNumber evidence="1">7.6.2.10</ecNumber>
    </recommendedName>
</protein>
<comment type="function">
    <text evidence="1">Part of the ABC transporter complex UgpBAEC involved in sn-glycerol-3-phosphate (G3P) import. Responsible for energy coupling to the transport system.</text>
</comment>
<comment type="catalytic activity">
    <reaction evidence="1">
        <text>sn-glycerol 3-phosphate(out) + ATP + H2O = sn-glycerol 3-phosphate(in) + ADP + phosphate + H(+)</text>
        <dbReference type="Rhea" id="RHEA:21668"/>
        <dbReference type="ChEBI" id="CHEBI:15377"/>
        <dbReference type="ChEBI" id="CHEBI:15378"/>
        <dbReference type="ChEBI" id="CHEBI:30616"/>
        <dbReference type="ChEBI" id="CHEBI:43474"/>
        <dbReference type="ChEBI" id="CHEBI:57597"/>
        <dbReference type="ChEBI" id="CHEBI:456216"/>
        <dbReference type="EC" id="7.6.2.10"/>
    </reaction>
</comment>
<comment type="subunit">
    <text evidence="1">The complex is composed of two ATP-binding proteins (UgpC), two transmembrane proteins (UgpA and UgpE) and a solute-binding protein (UgpB).</text>
</comment>
<comment type="subcellular location">
    <subcellularLocation>
        <location evidence="1">Cell inner membrane</location>
        <topology evidence="1">Peripheral membrane protein</topology>
    </subcellularLocation>
</comment>
<comment type="similarity">
    <text evidence="1">Belongs to the ABC transporter superfamily. sn-glycerol-3-phosphate importer (TC 3.A.1.1.3) family.</text>
</comment>
<dbReference type="EC" id="7.6.2.10" evidence="1"/>
<dbReference type="EMBL" id="AL590842">
    <property type="protein sequence ID" value="CAL22379.1"/>
    <property type="molecule type" value="Genomic_DNA"/>
</dbReference>
<dbReference type="EMBL" id="AE009952">
    <property type="protein sequence ID" value="AAM84026.1"/>
    <property type="molecule type" value="Genomic_DNA"/>
</dbReference>
<dbReference type="EMBL" id="AE017042">
    <property type="protein sequence ID" value="AAS63424.1"/>
    <property type="molecule type" value="Genomic_DNA"/>
</dbReference>
<dbReference type="PIR" id="AH0461">
    <property type="entry name" value="AH0461"/>
</dbReference>
<dbReference type="RefSeq" id="WP_002211523.1">
    <property type="nucleotide sequence ID" value="NZ_WHLN01000052.1"/>
</dbReference>
<dbReference type="RefSeq" id="YP_002348670.1">
    <property type="nucleotide sequence ID" value="NC_003143.1"/>
</dbReference>
<dbReference type="SMR" id="Q74R28"/>
<dbReference type="IntAct" id="Q74R28">
    <property type="interactions" value="10"/>
</dbReference>
<dbReference type="STRING" id="214092.YPO3793"/>
<dbReference type="PaxDb" id="214092-YPO3793"/>
<dbReference type="DNASU" id="1145384"/>
<dbReference type="EnsemblBacteria" id="AAS63424">
    <property type="protein sequence ID" value="AAS63424"/>
    <property type="gene ID" value="YP_3256"/>
</dbReference>
<dbReference type="KEGG" id="ype:YPO3793"/>
<dbReference type="KEGG" id="ypk:y0437"/>
<dbReference type="KEGG" id="ypm:YP_3256"/>
<dbReference type="PATRIC" id="fig|1028802.3.peg.583"/>
<dbReference type="eggNOG" id="COG3842">
    <property type="taxonomic scope" value="Bacteria"/>
</dbReference>
<dbReference type="HOGENOM" id="CLU_000604_1_1_6"/>
<dbReference type="OMA" id="HPKVFCM"/>
<dbReference type="OrthoDB" id="9802264at2"/>
<dbReference type="Proteomes" id="UP000000815">
    <property type="component" value="Chromosome"/>
</dbReference>
<dbReference type="Proteomes" id="UP000001019">
    <property type="component" value="Chromosome"/>
</dbReference>
<dbReference type="Proteomes" id="UP000002490">
    <property type="component" value="Chromosome"/>
</dbReference>
<dbReference type="GO" id="GO:0055052">
    <property type="term" value="C:ATP-binding cassette (ABC) transporter complex, substrate-binding subunit-containing"/>
    <property type="evidence" value="ECO:0000318"/>
    <property type="project" value="GO_Central"/>
</dbReference>
<dbReference type="GO" id="GO:0015430">
    <property type="term" value="F:ABC-type glycerol-3-phosphate transporter activity"/>
    <property type="evidence" value="ECO:0007669"/>
    <property type="project" value="UniProtKB-EC"/>
</dbReference>
<dbReference type="GO" id="GO:0005524">
    <property type="term" value="F:ATP binding"/>
    <property type="evidence" value="ECO:0007669"/>
    <property type="project" value="UniProtKB-KW"/>
</dbReference>
<dbReference type="GO" id="GO:0016887">
    <property type="term" value="F:ATP hydrolysis activity"/>
    <property type="evidence" value="ECO:0007669"/>
    <property type="project" value="InterPro"/>
</dbReference>
<dbReference type="GO" id="GO:0008643">
    <property type="term" value="P:carbohydrate transport"/>
    <property type="evidence" value="ECO:0007669"/>
    <property type="project" value="InterPro"/>
</dbReference>
<dbReference type="GO" id="GO:0015794">
    <property type="term" value="P:glycerol-3-phosphate transmembrane transport"/>
    <property type="evidence" value="ECO:0000318"/>
    <property type="project" value="GO_Central"/>
</dbReference>
<dbReference type="GO" id="GO:0001407">
    <property type="term" value="P:glycerophosphodiester transmembrane transport"/>
    <property type="evidence" value="ECO:0000318"/>
    <property type="project" value="GO_Central"/>
</dbReference>
<dbReference type="CDD" id="cd03301">
    <property type="entry name" value="ABC_MalK_N"/>
    <property type="match status" value="1"/>
</dbReference>
<dbReference type="FunFam" id="3.40.50.300:FF:000042">
    <property type="entry name" value="Maltose/maltodextrin ABC transporter, ATP-binding protein"/>
    <property type="match status" value="1"/>
</dbReference>
<dbReference type="FunFam" id="2.40.50.100:FF:000032">
    <property type="entry name" value="sn-glycerol-3-phosphate import ATP-binding protein UgpC"/>
    <property type="match status" value="1"/>
</dbReference>
<dbReference type="Gene3D" id="2.40.50.100">
    <property type="match status" value="1"/>
</dbReference>
<dbReference type="Gene3D" id="2.40.50.140">
    <property type="entry name" value="Nucleic acid-binding proteins"/>
    <property type="match status" value="1"/>
</dbReference>
<dbReference type="Gene3D" id="3.40.50.300">
    <property type="entry name" value="P-loop containing nucleotide triphosphate hydrolases"/>
    <property type="match status" value="1"/>
</dbReference>
<dbReference type="InterPro" id="IPR003593">
    <property type="entry name" value="AAA+_ATPase"/>
</dbReference>
<dbReference type="InterPro" id="IPR003439">
    <property type="entry name" value="ABC_transporter-like_ATP-bd"/>
</dbReference>
<dbReference type="InterPro" id="IPR017871">
    <property type="entry name" value="ABC_transporter-like_CS"/>
</dbReference>
<dbReference type="InterPro" id="IPR015855">
    <property type="entry name" value="ABC_transpr_MalK-like"/>
</dbReference>
<dbReference type="InterPro" id="IPR047641">
    <property type="entry name" value="ABC_transpr_MalK/UgpC-like"/>
</dbReference>
<dbReference type="InterPro" id="IPR008995">
    <property type="entry name" value="Mo/tungstate-bd_C_term_dom"/>
</dbReference>
<dbReference type="InterPro" id="IPR012340">
    <property type="entry name" value="NA-bd_OB-fold"/>
</dbReference>
<dbReference type="InterPro" id="IPR040582">
    <property type="entry name" value="OB_MalK-like"/>
</dbReference>
<dbReference type="InterPro" id="IPR027417">
    <property type="entry name" value="P-loop_NTPase"/>
</dbReference>
<dbReference type="NCBIfam" id="NF008653">
    <property type="entry name" value="PRK11650.1"/>
    <property type="match status" value="1"/>
</dbReference>
<dbReference type="PANTHER" id="PTHR43875">
    <property type="entry name" value="MALTODEXTRIN IMPORT ATP-BINDING PROTEIN MSMX"/>
    <property type="match status" value="1"/>
</dbReference>
<dbReference type="PANTHER" id="PTHR43875:SF12">
    <property type="entry name" value="SN-GLYCEROL-3-PHOSPHATE IMPORT ATP-BINDING PROTEIN UGPC"/>
    <property type="match status" value="1"/>
</dbReference>
<dbReference type="Pfam" id="PF00005">
    <property type="entry name" value="ABC_tran"/>
    <property type="match status" value="1"/>
</dbReference>
<dbReference type="Pfam" id="PF17912">
    <property type="entry name" value="OB_MalK"/>
    <property type="match status" value="1"/>
</dbReference>
<dbReference type="SMART" id="SM00382">
    <property type="entry name" value="AAA"/>
    <property type="match status" value="1"/>
</dbReference>
<dbReference type="SUPFAM" id="SSF50331">
    <property type="entry name" value="MOP-like"/>
    <property type="match status" value="1"/>
</dbReference>
<dbReference type="SUPFAM" id="SSF52540">
    <property type="entry name" value="P-loop containing nucleoside triphosphate hydrolases"/>
    <property type="match status" value="1"/>
</dbReference>
<dbReference type="PROSITE" id="PS00211">
    <property type="entry name" value="ABC_TRANSPORTER_1"/>
    <property type="match status" value="1"/>
</dbReference>
<dbReference type="PROSITE" id="PS50893">
    <property type="entry name" value="ABC_TRANSPORTER_2"/>
    <property type="match status" value="1"/>
</dbReference>
<dbReference type="PROSITE" id="PS51315">
    <property type="entry name" value="UGPC"/>
    <property type="match status" value="1"/>
</dbReference>
<reference key="1">
    <citation type="journal article" date="2001" name="Nature">
        <title>Genome sequence of Yersinia pestis, the causative agent of plague.</title>
        <authorList>
            <person name="Parkhill J."/>
            <person name="Wren B.W."/>
            <person name="Thomson N.R."/>
            <person name="Titball R.W."/>
            <person name="Holden M.T.G."/>
            <person name="Prentice M.B."/>
            <person name="Sebaihia M."/>
            <person name="James K.D."/>
            <person name="Churcher C.M."/>
            <person name="Mungall K.L."/>
            <person name="Baker S."/>
            <person name="Basham D."/>
            <person name="Bentley S.D."/>
            <person name="Brooks K."/>
            <person name="Cerdeno-Tarraga A.-M."/>
            <person name="Chillingworth T."/>
            <person name="Cronin A."/>
            <person name="Davies R.M."/>
            <person name="Davis P."/>
            <person name="Dougan G."/>
            <person name="Feltwell T."/>
            <person name="Hamlin N."/>
            <person name="Holroyd S."/>
            <person name="Jagels K."/>
            <person name="Karlyshev A.V."/>
            <person name="Leather S."/>
            <person name="Moule S."/>
            <person name="Oyston P.C.F."/>
            <person name="Quail M.A."/>
            <person name="Rutherford K.M."/>
            <person name="Simmonds M."/>
            <person name="Skelton J."/>
            <person name="Stevens K."/>
            <person name="Whitehead S."/>
            <person name="Barrell B.G."/>
        </authorList>
    </citation>
    <scope>NUCLEOTIDE SEQUENCE [LARGE SCALE GENOMIC DNA]</scope>
    <source>
        <strain>CO-92 / Biovar Orientalis</strain>
    </source>
</reference>
<reference key="2">
    <citation type="journal article" date="2002" name="J. Bacteriol.">
        <title>Genome sequence of Yersinia pestis KIM.</title>
        <authorList>
            <person name="Deng W."/>
            <person name="Burland V."/>
            <person name="Plunkett G. III"/>
            <person name="Boutin A."/>
            <person name="Mayhew G.F."/>
            <person name="Liss P."/>
            <person name="Perna N.T."/>
            <person name="Rose D.J."/>
            <person name="Mau B."/>
            <person name="Zhou S."/>
            <person name="Schwartz D.C."/>
            <person name="Fetherston J.D."/>
            <person name="Lindler L.E."/>
            <person name="Brubaker R.R."/>
            <person name="Plano G.V."/>
            <person name="Straley S.C."/>
            <person name="McDonough K.A."/>
            <person name="Nilles M.L."/>
            <person name="Matson J.S."/>
            <person name="Blattner F.R."/>
            <person name="Perry R.D."/>
        </authorList>
    </citation>
    <scope>NUCLEOTIDE SEQUENCE [LARGE SCALE GENOMIC DNA]</scope>
    <source>
        <strain>KIM10+ / Biovar Mediaevalis</strain>
    </source>
</reference>
<reference key="3">
    <citation type="journal article" date="2004" name="DNA Res.">
        <title>Complete genome sequence of Yersinia pestis strain 91001, an isolate avirulent to humans.</title>
        <authorList>
            <person name="Song Y."/>
            <person name="Tong Z."/>
            <person name="Wang J."/>
            <person name="Wang L."/>
            <person name="Guo Z."/>
            <person name="Han Y."/>
            <person name="Zhang J."/>
            <person name="Pei D."/>
            <person name="Zhou D."/>
            <person name="Qin H."/>
            <person name="Pang X."/>
            <person name="Han Y."/>
            <person name="Zhai J."/>
            <person name="Li M."/>
            <person name="Cui B."/>
            <person name="Qi Z."/>
            <person name="Jin L."/>
            <person name="Dai R."/>
            <person name="Chen F."/>
            <person name="Li S."/>
            <person name="Ye C."/>
            <person name="Du Z."/>
            <person name="Lin W."/>
            <person name="Wang J."/>
            <person name="Yu J."/>
            <person name="Yang H."/>
            <person name="Wang J."/>
            <person name="Huang P."/>
            <person name="Yang R."/>
        </authorList>
    </citation>
    <scope>NUCLEOTIDE SEQUENCE [LARGE SCALE GENOMIC DNA]</scope>
    <source>
        <strain>91001 / Biovar Mediaevalis</strain>
    </source>
</reference>
<accession>Q74R28</accession>
<accession>Q8D1I8</accession>
<sequence length="357" mass="39529">MACLKLQAVTKSYDGVTPVIKQIDLDVADGEFIVMVGPSGCGKSTLLRMVAGLERTTTGDIYIGDQRVTDLEPKDRGIAMVFQNYVLYPHMNVFDNMAYGLKIRGFGKEQIRQRVDEAARILELQPLLKRKPRELSGGQRQRVAMGRAIVREPAVFLFDEPLSNLDAKLRVQMRLELQQLHRRLKTTSLYVTHDQVEAMTLAQRVIVMNKGVAEQIGTPSEVYKRPASLFVASFIGSPAMNLLDGTVSPDGRTFILSDGLTLPLEIPQPQWGGRRLTLGIRPEHIQQTTSAQGVPMNLLTLELLGADNLAHGLWGGQSIIARLSHEEMPVAGSTLHLYLPPAALHFFDTDSGLRIEP</sequence>
<proteinExistence type="inferred from homology"/>
<evidence type="ECO:0000255" key="1">
    <source>
        <dbReference type="HAMAP-Rule" id="MF_01727"/>
    </source>
</evidence>
<evidence type="ECO:0000305" key="2"/>